<dbReference type="EMBL" id="X69198">
    <property type="protein sequence ID" value="CAA48980.1"/>
    <property type="molecule type" value="Genomic_DNA"/>
</dbReference>
<dbReference type="PIR" id="A36841">
    <property type="entry name" value="A36841"/>
</dbReference>
<dbReference type="RefSeq" id="NP_042083.1">
    <property type="nucleotide sequence ID" value="NC_001611.1"/>
</dbReference>
<dbReference type="GeneID" id="1486575"/>
<dbReference type="KEGG" id="vg:1486575"/>
<dbReference type="Proteomes" id="UP000002060">
    <property type="component" value="Segment"/>
</dbReference>
<dbReference type="InterPro" id="IPR007675">
    <property type="entry name" value="Poxvirus_F15"/>
</dbReference>
<dbReference type="Pfam" id="PF04596">
    <property type="entry name" value="Pox_F15"/>
    <property type="match status" value="1"/>
</dbReference>
<dbReference type="PIRSF" id="PIRSF015694">
    <property type="entry name" value="VAC_F15L"/>
    <property type="match status" value="1"/>
</dbReference>
<proteinExistence type="inferred from homology"/>
<organismHost>
    <name type="scientific">Homo sapiens</name>
    <name type="common">Human</name>
    <dbReference type="NCBI Taxonomy" id="9606"/>
</organismHost>
<feature type="chain" id="PRO_0000099513" description="Protein OPG060">
    <location>
        <begin position="1"/>
        <end position="161"/>
    </location>
</feature>
<keyword id="KW-0244">Early protein</keyword>
<keyword id="KW-1185">Reference proteome</keyword>
<sequence>MKRNEEYCGLHKLKMEIFNVEELINMKPFKNMNKITINQKDNCILANRCFVKIDTPRYIPLTSISSSNIIRIRNHDFTLSELLYSPFHFQQPQFQYLLPGFVLTCIDKVSKQQKECKYCISNRGDDDSLSINLFIPTINKSIYIIIGLRMKNFWKPKFEIE</sequence>
<protein>
    <recommendedName>
        <fullName>Protein OPG060</fullName>
    </recommendedName>
</protein>
<gene>
    <name type="primary">OPG060</name>
    <name type="ORF">C19L</name>
</gene>
<reference key="1">
    <citation type="journal article" date="1993" name="Virus Res.">
        <title>Analysis of the nucleotide sequence of a 43 kbp segment of the genome of variola virus India-1967 strain.</title>
        <authorList>
            <person name="Shchelkunov S.N."/>
            <person name="Blinov V.M."/>
            <person name="Resenchuk S.M."/>
            <person name="Totmenin A.V."/>
            <person name="Sandakhchiev L.S."/>
        </authorList>
    </citation>
    <scope>NUCLEOTIDE SEQUENCE [GENOMIC DNA]</scope>
</reference>
<reference key="2">
    <citation type="journal article" date="1993" name="FEBS Lett.">
        <title>Genes of variola and vaccinia viruses necessary to overcome the host protective mechanisms.</title>
        <authorList>
            <person name="Shchelkunov S.N."/>
            <person name="Blinov V.M."/>
            <person name="Sandakhchiev L.S."/>
        </authorList>
    </citation>
    <scope>NUCLEOTIDE SEQUENCE [GENOMIC DNA]</scope>
</reference>
<comment type="induction">
    <text evidence="1">Expressed in the early phase of the viral replicative cycle.</text>
</comment>
<comment type="similarity">
    <text evidence="2">Belongs to the orthopoxvirus OPG058 family.</text>
</comment>
<organism>
    <name type="scientific">Variola virus (isolate Human/India/Ind3/1967)</name>
    <name type="common">VARV</name>
    <name type="synonym">Smallpox virus</name>
    <dbReference type="NCBI Taxonomy" id="587200"/>
    <lineage>
        <taxon>Viruses</taxon>
        <taxon>Varidnaviria</taxon>
        <taxon>Bamfordvirae</taxon>
        <taxon>Nucleocytoviricota</taxon>
        <taxon>Pokkesviricetes</taxon>
        <taxon>Chitovirales</taxon>
        <taxon>Poxviridae</taxon>
        <taxon>Chordopoxvirinae</taxon>
        <taxon>Orthopoxvirus</taxon>
        <taxon>Variola virus</taxon>
    </lineage>
</organism>
<name>PG060_VAR67</name>
<accession>P0DOR7</accession>
<accession>P33873</accession>
<evidence type="ECO:0000250" key="1">
    <source>
        <dbReference type="UniProtKB" id="Q80HX4"/>
    </source>
</evidence>
<evidence type="ECO:0000305" key="2"/>